<name>GCST_FLAPJ</name>
<evidence type="ECO:0000255" key="1">
    <source>
        <dbReference type="HAMAP-Rule" id="MF_00259"/>
    </source>
</evidence>
<comment type="function">
    <text evidence="1">The glycine cleavage system catalyzes the degradation of glycine.</text>
</comment>
<comment type="catalytic activity">
    <reaction evidence="1">
        <text>N(6)-[(R)-S(8)-aminomethyldihydrolipoyl]-L-lysyl-[protein] + (6S)-5,6,7,8-tetrahydrofolate = N(6)-[(R)-dihydrolipoyl]-L-lysyl-[protein] + (6R)-5,10-methylene-5,6,7,8-tetrahydrofolate + NH4(+)</text>
        <dbReference type="Rhea" id="RHEA:16945"/>
        <dbReference type="Rhea" id="RHEA-COMP:10475"/>
        <dbReference type="Rhea" id="RHEA-COMP:10492"/>
        <dbReference type="ChEBI" id="CHEBI:15636"/>
        <dbReference type="ChEBI" id="CHEBI:28938"/>
        <dbReference type="ChEBI" id="CHEBI:57453"/>
        <dbReference type="ChEBI" id="CHEBI:83100"/>
        <dbReference type="ChEBI" id="CHEBI:83143"/>
        <dbReference type="EC" id="2.1.2.10"/>
    </reaction>
</comment>
<comment type="subunit">
    <text evidence="1">The glycine cleavage system is composed of four proteins: P, T, L and H.</text>
</comment>
<comment type="similarity">
    <text evidence="1">Belongs to the GcvT family.</text>
</comment>
<proteinExistence type="inferred from homology"/>
<organism>
    <name type="scientific">Flavobacterium psychrophilum (strain ATCC 49511 / DSM 21280 / CIP 103535 / JIP02/86)</name>
    <dbReference type="NCBI Taxonomy" id="402612"/>
    <lineage>
        <taxon>Bacteria</taxon>
        <taxon>Pseudomonadati</taxon>
        <taxon>Bacteroidota</taxon>
        <taxon>Flavobacteriia</taxon>
        <taxon>Flavobacteriales</taxon>
        <taxon>Flavobacteriaceae</taxon>
        <taxon>Flavobacterium</taxon>
    </lineage>
</organism>
<feature type="chain" id="PRO_1000047664" description="Aminomethyltransferase">
    <location>
        <begin position="1"/>
        <end position="360"/>
    </location>
</feature>
<reference key="1">
    <citation type="journal article" date="2007" name="Nat. Biotechnol.">
        <title>Complete genome sequence of the fish pathogen Flavobacterium psychrophilum.</title>
        <authorList>
            <person name="Duchaud E."/>
            <person name="Boussaha M."/>
            <person name="Loux V."/>
            <person name="Bernardet J.-F."/>
            <person name="Michel C."/>
            <person name="Kerouault B."/>
            <person name="Mondot S."/>
            <person name="Nicolas P."/>
            <person name="Bossy R."/>
            <person name="Caron C."/>
            <person name="Bessieres P."/>
            <person name="Gibrat J.-F."/>
            <person name="Claverol S."/>
            <person name="Dumetz F."/>
            <person name="Le Henaff M."/>
            <person name="Benmansour A."/>
        </authorList>
    </citation>
    <scope>NUCLEOTIDE SEQUENCE [LARGE SCALE GENOMIC DNA]</scope>
    <source>
        <strain>ATCC 49511 / DSM 21280 / CIP 103535 / JIP02/86</strain>
    </source>
</reference>
<dbReference type="EC" id="2.1.2.10" evidence="1"/>
<dbReference type="EMBL" id="AM398681">
    <property type="protein sequence ID" value="CAL42936.1"/>
    <property type="molecule type" value="Genomic_DNA"/>
</dbReference>
<dbReference type="RefSeq" id="WP_011962992.1">
    <property type="nucleotide sequence ID" value="NC_009613.3"/>
</dbReference>
<dbReference type="RefSeq" id="YP_001295752.1">
    <property type="nucleotide sequence ID" value="NC_009613.3"/>
</dbReference>
<dbReference type="SMR" id="A6GXW3"/>
<dbReference type="STRING" id="402612.FP0836"/>
<dbReference type="EnsemblBacteria" id="CAL42936">
    <property type="protein sequence ID" value="CAL42936"/>
    <property type="gene ID" value="FP0836"/>
</dbReference>
<dbReference type="GeneID" id="66552543"/>
<dbReference type="KEGG" id="fps:FP0836"/>
<dbReference type="PATRIC" id="fig|402612.5.peg.848"/>
<dbReference type="eggNOG" id="COG0404">
    <property type="taxonomic scope" value="Bacteria"/>
</dbReference>
<dbReference type="HOGENOM" id="CLU_007884_10_2_10"/>
<dbReference type="OrthoDB" id="9774591at2"/>
<dbReference type="Proteomes" id="UP000006394">
    <property type="component" value="Chromosome"/>
</dbReference>
<dbReference type="GO" id="GO:0005829">
    <property type="term" value="C:cytosol"/>
    <property type="evidence" value="ECO:0007669"/>
    <property type="project" value="TreeGrafter"/>
</dbReference>
<dbReference type="GO" id="GO:0005960">
    <property type="term" value="C:glycine cleavage complex"/>
    <property type="evidence" value="ECO:0007669"/>
    <property type="project" value="InterPro"/>
</dbReference>
<dbReference type="GO" id="GO:0004047">
    <property type="term" value="F:aminomethyltransferase activity"/>
    <property type="evidence" value="ECO:0007669"/>
    <property type="project" value="UniProtKB-UniRule"/>
</dbReference>
<dbReference type="GO" id="GO:0008483">
    <property type="term" value="F:transaminase activity"/>
    <property type="evidence" value="ECO:0007669"/>
    <property type="project" value="UniProtKB-KW"/>
</dbReference>
<dbReference type="GO" id="GO:0019464">
    <property type="term" value="P:glycine decarboxylation via glycine cleavage system"/>
    <property type="evidence" value="ECO:0007669"/>
    <property type="project" value="UniProtKB-UniRule"/>
</dbReference>
<dbReference type="FunFam" id="2.40.30.110:FF:000003">
    <property type="entry name" value="Aminomethyltransferase"/>
    <property type="match status" value="1"/>
</dbReference>
<dbReference type="FunFam" id="3.30.70.1400:FF:000001">
    <property type="entry name" value="Aminomethyltransferase"/>
    <property type="match status" value="1"/>
</dbReference>
<dbReference type="Gene3D" id="2.40.30.110">
    <property type="entry name" value="Aminomethyltransferase beta-barrel domains"/>
    <property type="match status" value="1"/>
</dbReference>
<dbReference type="Gene3D" id="3.30.70.1400">
    <property type="entry name" value="Aminomethyltransferase beta-barrel domains"/>
    <property type="match status" value="1"/>
</dbReference>
<dbReference type="Gene3D" id="4.10.1250.10">
    <property type="entry name" value="Aminomethyltransferase fragment"/>
    <property type="match status" value="1"/>
</dbReference>
<dbReference type="Gene3D" id="3.30.1360.120">
    <property type="entry name" value="Probable tRNA modification gtpase trme, domain 1"/>
    <property type="match status" value="1"/>
</dbReference>
<dbReference type="HAMAP" id="MF_00259">
    <property type="entry name" value="GcvT"/>
    <property type="match status" value="1"/>
</dbReference>
<dbReference type="InterPro" id="IPR006223">
    <property type="entry name" value="GCS_T"/>
</dbReference>
<dbReference type="InterPro" id="IPR022903">
    <property type="entry name" value="GCS_T_bac"/>
</dbReference>
<dbReference type="InterPro" id="IPR013977">
    <property type="entry name" value="GCST_C"/>
</dbReference>
<dbReference type="InterPro" id="IPR006222">
    <property type="entry name" value="GCV_T_N"/>
</dbReference>
<dbReference type="InterPro" id="IPR028896">
    <property type="entry name" value="GcvT/YgfZ/DmdA"/>
</dbReference>
<dbReference type="InterPro" id="IPR029043">
    <property type="entry name" value="GcvT/YgfZ_C"/>
</dbReference>
<dbReference type="InterPro" id="IPR027266">
    <property type="entry name" value="TrmE/GcvT_dom1"/>
</dbReference>
<dbReference type="NCBIfam" id="TIGR00528">
    <property type="entry name" value="gcvT"/>
    <property type="match status" value="1"/>
</dbReference>
<dbReference type="NCBIfam" id="NF001567">
    <property type="entry name" value="PRK00389.1"/>
    <property type="match status" value="1"/>
</dbReference>
<dbReference type="PANTHER" id="PTHR43757">
    <property type="entry name" value="AMINOMETHYLTRANSFERASE"/>
    <property type="match status" value="1"/>
</dbReference>
<dbReference type="PANTHER" id="PTHR43757:SF2">
    <property type="entry name" value="AMINOMETHYLTRANSFERASE, MITOCHONDRIAL"/>
    <property type="match status" value="1"/>
</dbReference>
<dbReference type="Pfam" id="PF01571">
    <property type="entry name" value="GCV_T"/>
    <property type="match status" value="1"/>
</dbReference>
<dbReference type="Pfam" id="PF08669">
    <property type="entry name" value="GCV_T_C"/>
    <property type="match status" value="1"/>
</dbReference>
<dbReference type="PIRSF" id="PIRSF006487">
    <property type="entry name" value="GcvT"/>
    <property type="match status" value="1"/>
</dbReference>
<dbReference type="SUPFAM" id="SSF101790">
    <property type="entry name" value="Aminomethyltransferase beta-barrel domain"/>
    <property type="match status" value="1"/>
</dbReference>
<dbReference type="SUPFAM" id="SSF103025">
    <property type="entry name" value="Folate-binding domain"/>
    <property type="match status" value="1"/>
</dbReference>
<keyword id="KW-0032">Aminotransferase</keyword>
<keyword id="KW-1185">Reference proteome</keyword>
<keyword id="KW-0808">Transferase</keyword>
<accession>A6GXW3</accession>
<protein>
    <recommendedName>
        <fullName evidence="1">Aminomethyltransferase</fullName>
        <ecNumber evidence="1">2.1.2.10</ecNumber>
    </recommendedName>
    <alternativeName>
        <fullName evidence="1">Glycine cleavage system T protein</fullName>
    </alternativeName>
</protein>
<sequence>MKNTALTNIHESLGAKMVPFAGYNMPVQYEGVNAEHEIVRTGVGVFDVSHMGEFFLKGENALALIQKVTSNDASKLVDGKAQYSCLPNNEGGIVDDLIIYKIADNHYMLVVNASNIEKDWNWISSHNDLGVDMQNLSDSYSLLAIQGPKAAEAMQSLTSIDLVNMPYYSFQIGEFAGLKDVTVSATGYTGSGGFEIYFKNEDAEAIWNKIFEAGKPFGIKPIGLAARDTLRLEMGFCLYGNDINDTTSPLEAGLGWITKFDKEFTNSANLKKQKEEGVARKLVAFEMQERAVPRHDYEIVDASGNVIGIVTSGTMSPSMNIGIGLGYVPTSFSTVDSDIFIRIRKNDVLAKVVKLPFYKK</sequence>
<gene>
    <name evidence="1" type="primary">gcvT</name>
    <name type="ordered locus">FP0836</name>
</gene>